<protein>
    <recommendedName>
        <fullName evidence="1">Transcription elongation factor GreA</fullName>
    </recommendedName>
    <alternativeName>
        <fullName evidence="1">Transcript cleavage factor GreA</fullName>
    </alternativeName>
</protein>
<feature type="chain" id="PRO_1000034259" description="Transcription elongation factor GreA">
    <location>
        <begin position="1"/>
        <end position="163"/>
    </location>
</feature>
<feature type="coiled-coil region" evidence="1">
    <location>
        <begin position="11"/>
        <end position="38"/>
    </location>
</feature>
<proteinExistence type="inferred from homology"/>
<dbReference type="EMBL" id="CP000527">
    <property type="protein sequence ID" value="ABM27168.1"/>
    <property type="molecule type" value="Genomic_DNA"/>
</dbReference>
<dbReference type="RefSeq" id="WP_010940503.1">
    <property type="nucleotide sequence ID" value="NC_008751.1"/>
</dbReference>
<dbReference type="SMR" id="A1V9Q2"/>
<dbReference type="KEGG" id="dvl:Dvul_0144"/>
<dbReference type="HOGENOM" id="CLU_101379_2_0_7"/>
<dbReference type="Proteomes" id="UP000009173">
    <property type="component" value="Chromosome"/>
</dbReference>
<dbReference type="GO" id="GO:0003677">
    <property type="term" value="F:DNA binding"/>
    <property type="evidence" value="ECO:0007669"/>
    <property type="project" value="UniProtKB-UniRule"/>
</dbReference>
<dbReference type="GO" id="GO:0070063">
    <property type="term" value="F:RNA polymerase binding"/>
    <property type="evidence" value="ECO:0007669"/>
    <property type="project" value="InterPro"/>
</dbReference>
<dbReference type="GO" id="GO:0006354">
    <property type="term" value="P:DNA-templated transcription elongation"/>
    <property type="evidence" value="ECO:0007669"/>
    <property type="project" value="TreeGrafter"/>
</dbReference>
<dbReference type="GO" id="GO:0032784">
    <property type="term" value="P:regulation of DNA-templated transcription elongation"/>
    <property type="evidence" value="ECO:0007669"/>
    <property type="project" value="UniProtKB-UniRule"/>
</dbReference>
<dbReference type="FunFam" id="1.10.287.180:FF:000001">
    <property type="entry name" value="Transcription elongation factor GreA"/>
    <property type="match status" value="1"/>
</dbReference>
<dbReference type="FunFam" id="3.10.50.30:FF:000001">
    <property type="entry name" value="Transcription elongation factor GreA"/>
    <property type="match status" value="1"/>
</dbReference>
<dbReference type="Gene3D" id="3.10.50.30">
    <property type="entry name" value="Transcription elongation factor, GreA/GreB, C-terminal domain"/>
    <property type="match status" value="1"/>
</dbReference>
<dbReference type="Gene3D" id="1.10.287.180">
    <property type="entry name" value="Transcription elongation factor, GreA/GreB, N-terminal domain"/>
    <property type="match status" value="1"/>
</dbReference>
<dbReference type="HAMAP" id="MF_00105">
    <property type="entry name" value="GreA_GreB"/>
    <property type="match status" value="1"/>
</dbReference>
<dbReference type="InterPro" id="IPR036953">
    <property type="entry name" value="GreA/GreB_C_sf"/>
</dbReference>
<dbReference type="InterPro" id="IPR018151">
    <property type="entry name" value="TF_GreA/GreB_CS"/>
</dbReference>
<dbReference type="InterPro" id="IPR006359">
    <property type="entry name" value="Tscrpt_elong_fac_GreA"/>
</dbReference>
<dbReference type="InterPro" id="IPR028624">
    <property type="entry name" value="Tscrpt_elong_fac_GreA/B"/>
</dbReference>
<dbReference type="InterPro" id="IPR001437">
    <property type="entry name" value="Tscrpt_elong_fac_GreA/B_C"/>
</dbReference>
<dbReference type="InterPro" id="IPR023459">
    <property type="entry name" value="Tscrpt_elong_fac_GreA/B_fam"/>
</dbReference>
<dbReference type="InterPro" id="IPR022691">
    <property type="entry name" value="Tscrpt_elong_fac_GreA/B_N"/>
</dbReference>
<dbReference type="InterPro" id="IPR036805">
    <property type="entry name" value="Tscrpt_elong_fac_GreA/B_N_sf"/>
</dbReference>
<dbReference type="NCBIfam" id="TIGR01462">
    <property type="entry name" value="greA"/>
    <property type="match status" value="1"/>
</dbReference>
<dbReference type="NCBIfam" id="NF001261">
    <property type="entry name" value="PRK00226.1-2"/>
    <property type="match status" value="1"/>
</dbReference>
<dbReference type="NCBIfam" id="NF001263">
    <property type="entry name" value="PRK00226.1-4"/>
    <property type="match status" value="1"/>
</dbReference>
<dbReference type="NCBIfam" id="NF001264">
    <property type="entry name" value="PRK00226.1-5"/>
    <property type="match status" value="1"/>
</dbReference>
<dbReference type="PANTHER" id="PTHR30437">
    <property type="entry name" value="TRANSCRIPTION ELONGATION FACTOR GREA"/>
    <property type="match status" value="1"/>
</dbReference>
<dbReference type="PANTHER" id="PTHR30437:SF4">
    <property type="entry name" value="TRANSCRIPTION ELONGATION FACTOR GREA"/>
    <property type="match status" value="1"/>
</dbReference>
<dbReference type="Pfam" id="PF01272">
    <property type="entry name" value="GreA_GreB"/>
    <property type="match status" value="1"/>
</dbReference>
<dbReference type="Pfam" id="PF03449">
    <property type="entry name" value="GreA_GreB_N"/>
    <property type="match status" value="1"/>
</dbReference>
<dbReference type="PIRSF" id="PIRSF006092">
    <property type="entry name" value="GreA_GreB"/>
    <property type="match status" value="1"/>
</dbReference>
<dbReference type="SUPFAM" id="SSF54534">
    <property type="entry name" value="FKBP-like"/>
    <property type="match status" value="1"/>
</dbReference>
<dbReference type="SUPFAM" id="SSF46557">
    <property type="entry name" value="GreA transcript cleavage protein, N-terminal domain"/>
    <property type="match status" value="1"/>
</dbReference>
<dbReference type="PROSITE" id="PS00829">
    <property type="entry name" value="GREAB_1"/>
    <property type="match status" value="1"/>
</dbReference>
<dbReference type="PROSITE" id="PS00830">
    <property type="entry name" value="GREAB_2"/>
    <property type="match status" value="1"/>
</dbReference>
<gene>
    <name evidence="1" type="primary">greA</name>
    <name type="ordered locus">Dvul_0144</name>
</gene>
<keyword id="KW-0175">Coiled coil</keyword>
<keyword id="KW-0238">DNA-binding</keyword>
<keyword id="KW-0804">Transcription</keyword>
<keyword id="KW-0805">Transcription regulation</keyword>
<accession>A1V9Q2</accession>
<comment type="function">
    <text evidence="1">Necessary for efficient RNA polymerase transcription elongation past template-encoded arresting sites. The arresting sites in DNA have the property of trapping a certain fraction of elongating RNA polymerases that pass through, resulting in locked ternary complexes. Cleavage of the nascent transcript by cleavage factors such as GreA or GreB allows the resumption of elongation from the new 3'terminus. GreA releases sequences of 2 to 3 nucleotides.</text>
</comment>
<comment type="similarity">
    <text evidence="1">Belongs to the GreA/GreB family.</text>
</comment>
<name>GREA_NITV4</name>
<organism>
    <name type="scientific">Nitratidesulfovibrio vulgaris (strain DP4)</name>
    <name type="common">Desulfovibrio vulgaris</name>
    <dbReference type="NCBI Taxonomy" id="391774"/>
    <lineage>
        <taxon>Bacteria</taxon>
        <taxon>Pseudomonadati</taxon>
        <taxon>Thermodesulfobacteriota</taxon>
        <taxon>Desulfovibrionia</taxon>
        <taxon>Desulfovibrionales</taxon>
        <taxon>Desulfovibrionaceae</taxon>
        <taxon>Nitratidesulfovibrio</taxon>
    </lineage>
</organism>
<sequence length="163" mass="18151">MSSIPISVEGFKQLEKELDRLKKERPGVIQAIKEAREEGDLSENAGYDAARERQGMLEARIKYIESRMAQFNVIDLDTISGDKVMFGATVKIEDLESGEEKEYTLLGPDEADYAKGSISVQSPVARAMLGKEEGDEIVVDAPRGKIHYEIVSIRFLGTKGQQR</sequence>
<evidence type="ECO:0000255" key="1">
    <source>
        <dbReference type="HAMAP-Rule" id="MF_00105"/>
    </source>
</evidence>
<reference key="1">
    <citation type="journal article" date="2009" name="Environ. Microbiol.">
        <title>Contribution of mobile genetic elements to Desulfovibrio vulgaris genome plasticity.</title>
        <authorList>
            <person name="Walker C.B."/>
            <person name="Stolyar S."/>
            <person name="Chivian D."/>
            <person name="Pinel N."/>
            <person name="Gabster J.A."/>
            <person name="Dehal P.S."/>
            <person name="He Z."/>
            <person name="Yang Z.K."/>
            <person name="Yen H.C."/>
            <person name="Zhou J."/>
            <person name="Wall J.D."/>
            <person name="Hazen T.C."/>
            <person name="Arkin A.P."/>
            <person name="Stahl D.A."/>
        </authorList>
    </citation>
    <scope>NUCLEOTIDE SEQUENCE [LARGE SCALE GENOMIC DNA]</scope>
    <source>
        <strain>DP4</strain>
    </source>
</reference>